<comment type="function">
    <text evidence="1">Could be a nuclease involved in processing of the 5'-end of pre-16S rRNA.</text>
</comment>
<comment type="subcellular location">
    <subcellularLocation>
        <location evidence="1">Cytoplasm</location>
    </subcellularLocation>
</comment>
<comment type="similarity">
    <text evidence="1">Belongs to the YqgF nuclease family.</text>
</comment>
<protein>
    <recommendedName>
        <fullName evidence="1">Putative pre-16S rRNA nuclease</fullName>
        <ecNumber evidence="1">3.1.-.-</ecNumber>
    </recommendedName>
</protein>
<keyword id="KW-0963">Cytoplasm</keyword>
<keyword id="KW-0378">Hydrolase</keyword>
<keyword id="KW-0540">Nuclease</keyword>
<keyword id="KW-0690">Ribosome biogenesis</keyword>
<organism>
    <name type="scientific">Mycobacterium bovis (strain BCG / Tokyo 172 / ATCC 35737 / TMC 1019)</name>
    <dbReference type="NCBI Taxonomy" id="561275"/>
    <lineage>
        <taxon>Bacteria</taxon>
        <taxon>Bacillati</taxon>
        <taxon>Actinomycetota</taxon>
        <taxon>Actinomycetes</taxon>
        <taxon>Mycobacteriales</taxon>
        <taxon>Mycobacteriaceae</taxon>
        <taxon>Mycobacterium</taxon>
        <taxon>Mycobacterium tuberculosis complex</taxon>
    </lineage>
</organism>
<proteinExistence type="inferred from homology"/>
<feature type="chain" id="PRO_1000147485" description="Putative pre-16S rRNA nuclease">
    <location>
        <begin position="1"/>
        <end position="170"/>
    </location>
</feature>
<feature type="region of interest" description="Disordered" evidence="2">
    <location>
        <begin position="1"/>
        <end position="25"/>
    </location>
</feature>
<feature type="compositionally biased region" description="Basic and acidic residues" evidence="2">
    <location>
        <begin position="7"/>
        <end position="21"/>
    </location>
</feature>
<sequence>MVPAQHRPPDRPGDPAHDPGRGRRLGIDVGAARIGVACSDPDAILATPVETVRRDRSGKHLRRLAALAAELEAVEVIVGLPRTLADRIGRSAQDAIELAEALARRVSPTPVRLADERLTTVSAQRSLRQAGVRASEQRAVIDQAAAVAILQSWLDERLAAMAGTQEGSDA</sequence>
<accession>C1AF23</accession>
<dbReference type="EC" id="3.1.-.-" evidence="1"/>
<dbReference type="EMBL" id="AP010918">
    <property type="protein sequence ID" value="BAH26852.1"/>
    <property type="molecule type" value="Genomic_DNA"/>
</dbReference>
<dbReference type="SMR" id="C1AF23"/>
<dbReference type="KEGG" id="mbt:JTY_2571"/>
<dbReference type="HOGENOM" id="CLU_098240_0_1_11"/>
<dbReference type="GO" id="GO:0005829">
    <property type="term" value="C:cytosol"/>
    <property type="evidence" value="ECO:0007669"/>
    <property type="project" value="TreeGrafter"/>
</dbReference>
<dbReference type="GO" id="GO:0004518">
    <property type="term" value="F:nuclease activity"/>
    <property type="evidence" value="ECO:0007669"/>
    <property type="project" value="UniProtKB-KW"/>
</dbReference>
<dbReference type="GO" id="GO:0000967">
    <property type="term" value="P:rRNA 5'-end processing"/>
    <property type="evidence" value="ECO:0007669"/>
    <property type="project" value="UniProtKB-UniRule"/>
</dbReference>
<dbReference type="CDD" id="cd16964">
    <property type="entry name" value="YqgF"/>
    <property type="match status" value="1"/>
</dbReference>
<dbReference type="FunFam" id="3.30.420.140:FF:000005">
    <property type="entry name" value="Putative pre-16S rRNA nuclease"/>
    <property type="match status" value="1"/>
</dbReference>
<dbReference type="Gene3D" id="3.30.420.140">
    <property type="entry name" value="YqgF/RNase H-like domain"/>
    <property type="match status" value="1"/>
</dbReference>
<dbReference type="HAMAP" id="MF_00651">
    <property type="entry name" value="Nuclease_YqgF"/>
    <property type="match status" value="1"/>
</dbReference>
<dbReference type="InterPro" id="IPR012337">
    <property type="entry name" value="RNaseH-like_sf"/>
</dbReference>
<dbReference type="InterPro" id="IPR005227">
    <property type="entry name" value="YqgF"/>
</dbReference>
<dbReference type="InterPro" id="IPR006641">
    <property type="entry name" value="YqgF/RNaseH-like_dom"/>
</dbReference>
<dbReference type="InterPro" id="IPR037027">
    <property type="entry name" value="YqgF/RNaseH-like_dom_sf"/>
</dbReference>
<dbReference type="NCBIfam" id="TIGR00250">
    <property type="entry name" value="RNAse_H_YqgF"/>
    <property type="match status" value="1"/>
</dbReference>
<dbReference type="PANTHER" id="PTHR33317">
    <property type="entry name" value="POLYNUCLEOTIDYL TRANSFERASE, RIBONUCLEASE H-LIKE SUPERFAMILY PROTEIN"/>
    <property type="match status" value="1"/>
</dbReference>
<dbReference type="PANTHER" id="PTHR33317:SF4">
    <property type="entry name" value="POLYNUCLEOTIDYL TRANSFERASE, RIBONUCLEASE H-LIKE SUPERFAMILY PROTEIN"/>
    <property type="match status" value="1"/>
</dbReference>
<dbReference type="Pfam" id="PF03652">
    <property type="entry name" value="RuvX"/>
    <property type="match status" value="1"/>
</dbReference>
<dbReference type="SMART" id="SM00732">
    <property type="entry name" value="YqgFc"/>
    <property type="match status" value="1"/>
</dbReference>
<dbReference type="SUPFAM" id="SSF53098">
    <property type="entry name" value="Ribonuclease H-like"/>
    <property type="match status" value="1"/>
</dbReference>
<gene>
    <name type="ordered locus">JTY_2571</name>
</gene>
<evidence type="ECO:0000255" key="1">
    <source>
        <dbReference type="HAMAP-Rule" id="MF_00651"/>
    </source>
</evidence>
<evidence type="ECO:0000256" key="2">
    <source>
        <dbReference type="SAM" id="MobiDB-lite"/>
    </source>
</evidence>
<name>YQGF_MYCBT</name>
<reference key="1">
    <citation type="journal article" date="2009" name="Vaccine">
        <title>Whole genome sequence analysis of Mycobacterium bovis bacillus Calmette-Guerin (BCG) Tokyo 172: a comparative study of BCG vaccine substrains.</title>
        <authorList>
            <person name="Seki M."/>
            <person name="Honda I."/>
            <person name="Fujita I."/>
            <person name="Yano I."/>
            <person name="Yamamoto S."/>
            <person name="Koyama A."/>
        </authorList>
    </citation>
    <scope>NUCLEOTIDE SEQUENCE [LARGE SCALE GENOMIC DNA]</scope>
    <source>
        <strain>BCG / Tokyo 172 / ATCC 35737 / TMC 1019</strain>
    </source>
</reference>